<accession>P21698</accession>
<accession>A2SZX2</accession>
<organismHost>
    <name type="scientific">Aedes</name>
    <dbReference type="NCBI Taxonomy" id="7158"/>
</organismHost>
<organismHost>
    <name type="scientific">Bos taurus</name>
    <name type="common">Bovine</name>
    <dbReference type="NCBI Taxonomy" id="9913"/>
</organismHost>
<organismHost>
    <name type="scientific">Bos taurus x Bison bison</name>
    <name type="common">beefalo</name>
    <dbReference type="NCBI Taxonomy" id="297284"/>
</organismHost>
<organismHost>
    <name type="scientific">Camelus bactrianus</name>
    <name type="common">Bactrian camel</name>
    <dbReference type="NCBI Taxonomy" id="9837"/>
</organismHost>
<organismHost>
    <name type="scientific">Capra hircus</name>
    <name type="common">Goat</name>
    <dbReference type="NCBI Taxonomy" id="9925"/>
</organismHost>
<organismHost>
    <name type="scientific">Homo sapiens</name>
    <name type="common">Human</name>
    <dbReference type="NCBI Taxonomy" id="9606"/>
</organismHost>
<organismHost>
    <name type="scientific">Ovis aries</name>
    <name type="common">Sheep</name>
    <dbReference type="NCBI Taxonomy" id="9940"/>
</organismHost>
<organismHost>
    <name type="scientific">Phlebotomus papatasi</name>
    <name type="common">Sandfly</name>
    <dbReference type="NCBI Taxonomy" id="29031"/>
</organismHost>
<dbReference type="EMBL" id="X53771">
    <property type="protein sequence ID" value="CAA37788.1"/>
    <property type="molecule type" value="Genomic_RNA"/>
</dbReference>
<dbReference type="EMBL" id="DQ380143">
    <property type="protein sequence ID" value="ABD38716.1"/>
    <property type="molecule type" value="Genomic_RNA"/>
</dbReference>
<dbReference type="EMBL" id="KY366328">
    <property type="protein sequence ID" value="ASF20659.1"/>
    <property type="molecule type" value="Genomic_RNA"/>
</dbReference>
<dbReference type="EMBL" id="EU312138">
    <property type="protein sequence ID" value="ACA14424.1"/>
    <property type="molecule type" value="Genomic_RNA"/>
</dbReference>
<dbReference type="EMBL" id="EU312137">
    <property type="protein sequence ID" value="ACA14422.1"/>
    <property type="molecule type" value="Genomic_RNA"/>
</dbReference>
<dbReference type="EMBL" id="EU312134">
    <property type="protein sequence ID" value="ACA14416.1"/>
    <property type="molecule type" value="Genomic_RNA"/>
</dbReference>
<dbReference type="EMBL" id="EU312112">
    <property type="protein sequence ID" value="ACA14372.1"/>
    <property type="molecule type" value="Genomic_RNA"/>
</dbReference>
<dbReference type="EMBL" id="EU312110">
    <property type="protein sequence ID" value="ACA14368.1"/>
    <property type="molecule type" value="Genomic_RNA"/>
</dbReference>
<dbReference type="EMBL" id="DQ380149">
    <property type="protein sequence ID" value="ABD38728.1"/>
    <property type="molecule type" value="Genomic_RNA"/>
</dbReference>
<dbReference type="EMBL" id="DQ380148">
    <property type="protein sequence ID" value="ABD38726.1"/>
    <property type="molecule type" value="Genomic_RNA"/>
</dbReference>
<dbReference type="EMBL" id="DQ380147">
    <property type="protein sequence ID" value="ABD38724.1"/>
    <property type="molecule type" value="Genomic_RNA"/>
</dbReference>
<dbReference type="EMBL" id="DQ380144">
    <property type="protein sequence ID" value="ABD38718.1"/>
    <property type="molecule type" value="Genomic_RNA"/>
</dbReference>
<dbReference type="PIR" id="C38552">
    <property type="entry name" value="MNVURV"/>
</dbReference>
<dbReference type="RefSeq" id="YP_003848706.1">
    <property type="nucleotide sequence ID" value="NC_014395.1"/>
</dbReference>
<dbReference type="PDB" id="2N0Y">
    <property type="method" value="NMR"/>
    <property type="chains" value="B=247-265"/>
</dbReference>
<dbReference type="PDB" id="5OOO">
    <property type="method" value="X-ray"/>
    <property type="resolution" value="2.20 A"/>
    <property type="chains" value="A/B=83-248"/>
</dbReference>
<dbReference type="PDB" id="8T2M">
    <property type="method" value="X-ray"/>
    <property type="resolution" value="1.27 A"/>
    <property type="chains" value="A=257-265"/>
</dbReference>
<dbReference type="PDB" id="8T2N">
    <property type="method" value="X-ray"/>
    <property type="resolution" value="1.88 A"/>
    <property type="chains" value="B/D=234-255"/>
</dbReference>
<dbReference type="PDBsum" id="2N0Y"/>
<dbReference type="PDBsum" id="5OOO"/>
<dbReference type="PDBsum" id="8T2M"/>
<dbReference type="PDBsum" id="8T2N"/>
<dbReference type="SMR" id="P21698"/>
<dbReference type="IntAct" id="P21698">
    <property type="interactions" value="26"/>
</dbReference>
<dbReference type="iPTMnet" id="P21698"/>
<dbReference type="GeneID" id="9538292"/>
<dbReference type="KEGG" id="vg:9538292"/>
<dbReference type="Proteomes" id="UP000002477">
    <property type="component" value="Genome"/>
</dbReference>
<dbReference type="GO" id="GO:0030430">
    <property type="term" value="C:host cell cytoplasm"/>
    <property type="evidence" value="ECO:0007669"/>
    <property type="project" value="UniProtKB-SubCell"/>
</dbReference>
<dbReference type="GO" id="GO:0042025">
    <property type="term" value="C:host cell nucleus"/>
    <property type="evidence" value="ECO:0000314"/>
    <property type="project" value="UniProt"/>
</dbReference>
<dbReference type="GO" id="GO:0030291">
    <property type="term" value="F:protein serine/threonine kinase inhibitor activity"/>
    <property type="evidence" value="ECO:0007669"/>
    <property type="project" value="UniProtKB-KW"/>
</dbReference>
<dbReference type="GO" id="GO:0039689">
    <property type="term" value="P:negative stranded viral RNA replication"/>
    <property type="evidence" value="ECO:0000315"/>
    <property type="project" value="CACAO"/>
</dbReference>
<dbReference type="GO" id="GO:0044067">
    <property type="term" value="P:symbiont-mediated perturbation of host cell-cell junction"/>
    <property type="evidence" value="ECO:0000269"/>
    <property type="project" value="SigSci"/>
</dbReference>
<dbReference type="GO" id="GO:0052039">
    <property type="term" value="P:symbiont-mediated perturbation of host cytoskeleton"/>
    <property type="evidence" value="ECO:0000269"/>
    <property type="project" value="SigSci"/>
</dbReference>
<dbReference type="GO" id="GO:0039657">
    <property type="term" value="P:symbiont-mediated suppression of host gene expression"/>
    <property type="evidence" value="ECO:0000315"/>
    <property type="project" value="CACAO"/>
</dbReference>
<dbReference type="GO" id="GO:0052170">
    <property type="term" value="P:symbiont-mediated suppression of host innate immune response"/>
    <property type="evidence" value="ECO:0007669"/>
    <property type="project" value="UniProtKB-KW"/>
</dbReference>
<dbReference type="GO" id="GO:0039580">
    <property type="term" value="P:symbiont-mediated suppression of host PKR/eIFalpha signaling"/>
    <property type="evidence" value="ECO:0007669"/>
    <property type="project" value="UniProtKB-KW"/>
</dbReference>
<dbReference type="GO" id="GO:0039653">
    <property type="term" value="P:symbiont-mediated suppression of host transcription"/>
    <property type="evidence" value="ECO:0000315"/>
    <property type="project" value="CACAO"/>
</dbReference>
<dbReference type="GO" id="GO:0039602">
    <property type="term" value="P:symbiont-mediated suppression of host transcription initiation from RNA polymerase II promoter"/>
    <property type="evidence" value="ECO:0000314"/>
    <property type="project" value="CACAO"/>
</dbReference>
<dbReference type="GO" id="GO:0039502">
    <property type="term" value="P:symbiont-mediated suppression of host type I interferon-mediated signaling pathway"/>
    <property type="evidence" value="ECO:0000315"/>
    <property type="project" value="CACAO"/>
</dbReference>
<dbReference type="InterPro" id="IPR039434">
    <property type="entry name" value="NSs-like"/>
</dbReference>
<dbReference type="InterPro" id="IPR024376">
    <property type="entry name" value="RVFV_non-structural"/>
</dbReference>
<dbReference type="Pfam" id="PF11073">
    <property type="entry name" value="NSs"/>
    <property type="match status" value="1"/>
</dbReference>
<dbReference type="PIRSF" id="PIRSF003956">
    <property type="entry name" value="NS-S_PhleboV"/>
    <property type="match status" value="1"/>
</dbReference>
<keyword id="KW-0002">3D-structure</keyword>
<keyword id="KW-1262">Eukaryotic host gene expression shutoff by virus</keyword>
<keyword id="KW-1191">Eukaryotic host transcription shutoff by virus</keyword>
<keyword id="KW-1035">Host cytoplasm</keyword>
<keyword id="KW-1190">Host gene expression shutoff by virus</keyword>
<keyword id="KW-1048">Host nucleus</keyword>
<keyword id="KW-0945">Host-virus interaction</keyword>
<keyword id="KW-1111">Inhibition of eukaryotic host transcription initiation by virus</keyword>
<keyword id="KW-1090">Inhibition of host innate immune response by virus</keyword>
<keyword id="KW-1114">Inhibition of host interferon signaling pathway by virus</keyword>
<keyword id="KW-1102">Inhibition of host PKR by virus</keyword>
<keyword id="KW-0922">Interferon antiviral system evasion</keyword>
<keyword id="KW-0597">Phosphoprotein</keyword>
<keyword id="KW-1185">Reference proteome</keyword>
<keyword id="KW-0899">Viral immunoevasion</keyword>
<comment type="function">
    <text evidence="1 2 3 4 5 6 7 9 10 11 12 13">Plays a role in the escape of host innate immune response by promoting the degradation of host EIF2AK2/PKR and inhibiting host transcription (PubMed:19197350, PubMed:19211744, PubMed:19751406). Cytoplasmic NSs interacts with host FBXW11 to degrade PKR whereas nuclear pool binds to host FBXO3 to target TFIIH subunit GTF2H1 for proteasomal degradation with the help of the linker protein SKP1 (PubMed:19211744, PubMed:21543505, PubMed:23063407, PubMed:26837067, PubMed:39366381). Removes FBXO3 isoform 1 from the nucleus (PubMed:24403578). Forms nuclear amyloid-like filaments of about 12 nm in width that may sequester NSs binding partners, causing cell cycle arrest (PubMed:10233964, PubMed:28915104, PubMed:32612175). Also aggragates in the cytosol as short fibrils late after host cell infection (PubMed:32612175). Plays a role in cell morphology and/or motility, reduction of lamellipodia, cell spreading, and dissolution of adherens junctions (PubMed:33087469).</text>
</comment>
<comment type="subunit">
    <text evidence="1 5 7 8 9 10 13">Multimerizes; forms 0.5-1 mm thick proteinaceous filaments in the nucleus (PubMed:10233964, PubMed:28915104). Interacts (via omegaXaV motif) with host FBXW11; this interaction is important for EIF2AK2/PKR degradation (PubMed:21543505, PubMed:26837067). Interacts (via omegaXaV motif) with host GTF2H1 (PubMed:25918396). Interacts with the host E3 ubiquitin ligase component FBXO3 (via ApaG domain); this interaction is important for GTF2H1 degradation (PubMed:24403578, PubMed:39366381).</text>
</comment>
<comment type="subcellular location">
    <subcellularLocation>
        <location evidence="1 8 14">Host nucleus</location>
    </subcellularLocation>
    <subcellularLocation>
        <location evidence="8">Host cytoplasm</location>
    </subcellularLocation>
</comment>
<comment type="domain">
    <text evidence="1 8 9">The C-terminus disordered region is involved in multimerization, filament formation, but not nuclear localization (PubMed:10233964). OmegaXaV motif is required for both nuclear filament formation and degradation of host GTF2H1 (PubMed:25918396). This motif also mediates FBXW11 binding (PubMed:26837067).</text>
</comment>
<comment type="PTM">
    <text evidence="1">Phosphorylated.</text>
</comment>
<comment type="similarity">
    <text evidence="15">Belongs to the phlebovirus NS-S protein family.</text>
</comment>
<evidence type="ECO:0000269" key="1">
    <source>
    </source>
</evidence>
<evidence type="ECO:0000269" key="2">
    <source>
    </source>
</evidence>
<evidence type="ECO:0000269" key="3">
    <source>
    </source>
</evidence>
<evidence type="ECO:0000269" key="4">
    <source>
    </source>
</evidence>
<evidence type="ECO:0000269" key="5">
    <source>
    </source>
</evidence>
<evidence type="ECO:0000269" key="6">
    <source>
    </source>
</evidence>
<evidence type="ECO:0000269" key="7">
    <source>
    </source>
</evidence>
<evidence type="ECO:0000269" key="8">
    <source>
    </source>
</evidence>
<evidence type="ECO:0000269" key="9">
    <source>
    </source>
</evidence>
<evidence type="ECO:0000269" key="10">
    <source>
    </source>
</evidence>
<evidence type="ECO:0000269" key="11">
    <source>
    </source>
</evidence>
<evidence type="ECO:0000269" key="12">
    <source>
    </source>
</evidence>
<evidence type="ECO:0000269" key="13">
    <source>
    </source>
</evidence>
<evidence type="ECO:0000269" key="14">
    <source>
    </source>
</evidence>
<evidence type="ECO:0000305" key="15"/>
<evidence type="ECO:0000305" key="16">
    <source>
    </source>
</evidence>
<evidence type="ECO:0007744" key="17">
    <source>
        <dbReference type="PDB" id="5OOO"/>
    </source>
</evidence>
<evidence type="ECO:0007829" key="18">
    <source>
        <dbReference type="PDB" id="2N0Y"/>
    </source>
</evidence>
<evidence type="ECO:0007829" key="19">
    <source>
        <dbReference type="PDB" id="5OOO"/>
    </source>
</evidence>
<name>NSS_RVFVZ</name>
<gene>
    <name type="primary">NSS</name>
</gene>
<proteinExistence type="evidence at protein level"/>
<feature type="chain" id="PRO_0000221979" description="Non-structural protein S">
    <location>
        <begin position="1"/>
        <end position="265"/>
    </location>
</feature>
<feature type="region of interest" description="Disordered" evidence="10">
    <location>
        <begin position="249"/>
        <end position="265"/>
    </location>
</feature>
<feature type="short sequence motif" description="OmegaXaV" evidence="8">
    <location>
        <begin position="261"/>
        <end position="265"/>
    </location>
</feature>
<feature type="modified residue" description="Phosphoserine" evidence="1">
    <location>
        <position position="252"/>
    </location>
</feature>
<feature type="modified residue" description="Phosphoserine" evidence="1">
    <location>
        <position position="256"/>
    </location>
</feature>
<feature type="mutagenesis site" description="No effect on filament formation." evidence="13">
    <original>R</original>
    <variation>A</variation>
    <location>
        <position position="16"/>
    </location>
</feature>
<feature type="mutagenesis site" description="No effect on filament formation." evidence="13">
    <original>R</original>
    <variation>A</variation>
    <location>
        <position position="30"/>
    </location>
</feature>
<feature type="mutagenesis site" description="No effect on filament formation." evidence="13">
    <original>P</original>
    <variation>A</variation>
    <location>
        <position position="80"/>
    </location>
</feature>
<feature type="mutagenesis site" description="No effect on filament formation." evidence="13">
    <original>P</original>
    <variation>A</variation>
    <location>
        <position position="81"/>
    </location>
</feature>
<feature type="mutagenesis site" description="No effect on filament formation." evidence="13">
    <original>P</original>
    <variation>A</variation>
    <location>
        <position position="82"/>
    </location>
</feature>
<feature type="mutagenesis site" description="No effect on filament formation." evidence="13">
    <original>K</original>
    <variation>A</variation>
    <location>
        <position position="84"/>
    </location>
</feature>
<feature type="mutagenesis site" description="No effect on filament formation." evidence="13">
    <original>R</original>
    <variation>A</variation>
    <location>
        <position position="88"/>
    </location>
</feature>
<feature type="mutagenesis site" description="Partially disrupts filament formation." evidence="13">
    <original>K</original>
    <variation>A</variation>
    <location>
        <position position="150"/>
    </location>
</feature>
<feature type="mutagenesis site" description="No effect on filament formation." evidence="13">
    <original>N</original>
    <variation>A</variation>
    <location>
        <position position="153"/>
    </location>
</feature>
<feature type="mutagenesis site" description="No effect on filament formation." evidence="13">
    <original>D</original>
    <variation>A</variation>
    <location>
        <position position="157"/>
    </location>
</feature>
<feature type="mutagenesis site" description="Disrupts filament formation. Inhibits TFIIH complex degradation. Loss of interaction with FBXO3." evidence="13">
    <original>R</original>
    <variation>A</variation>
    <location>
        <position position="164"/>
    </location>
</feature>
<feature type="mutagenesis site" description="Partially disrupts filament formation." evidence="13">
    <original>T</original>
    <variation>A</variation>
    <location>
        <position position="168"/>
    </location>
</feature>
<feature type="mutagenesis site" description="Complete loss of binding to host EIF2AK2/PKR. Partially disrupts filament formation." evidence="6 13">
    <original>R</original>
    <variation>A</variation>
    <location>
        <position position="173"/>
    </location>
</feature>
<feature type="mutagenesis site" description="No effect on filament formation." evidence="13">
    <original>C</original>
    <variation>A</variation>
    <location>
        <position position="178"/>
    </location>
</feature>
<feature type="mutagenesis site" description="No effect on filament formation." evidence="13">
    <original>E</original>
    <variation>A</variation>
    <location>
        <position position="221"/>
    </location>
</feature>
<feature type="mutagenesis site" description="No effect on filament formation." evidence="13">
    <original>S</original>
    <variation>A</variation>
    <location>
        <position position="228"/>
    </location>
</feature>
<feature type="mutagenesis site" description="Partially disrupts filament formation." evidence="13">
    <original>R</original>
    <variation>A</variation>
    <location>
        <position position="235"/>
    </location>
</feature>
<feature type="mutagenesis site" description="Partially disrupts filament formation." evidence="13">
    <original>N</original>
    <variation>A</variation>
    <location>
        <position position="237"/>
    </location>
</feature>
<feature type="mutagenesis site" description="No effect on filament formation." evidence="13">
    <original>P</original>
    <variation>A</variation>
    <location>
        <position position="240"/>
    </location>
</feature>
<feature type="mutagenesis site" description="Loss of formation of nuclear filaments and GTF2H1 degradation. Decreased virulence.">
    <original>F</original>
    <variation>P</variation>
    <variation>S</variation>
    <location>
        <position position="261"/>
    </location>
</feature>
<feature type="sequence conflict" description="In Ref. 1; CAA37788." evidence="16" ref="1">
    <original>V</original>
    <variation>A</variation>
    <location>
        <position position="160"/>
    </location>
</feature>
<feature type="helix" evidence="19">
    <location>
        <begin position="87"/>
        <end position="93"/>
    </location>
</feature>
<feature type="helix" evidence="19">
    <location>
        <begin position="98"/>
        <end position="102"/>
    </location>
</feature>
<feature type="helix" evidence="19">
    <location>
        <begin position="105"/>
        <end position="110"/>
    </location>
</feature>
<feature type="turn" evidence="19">
    <location>
        <begin position="111"/>
        <end position="116"/>
    </location>
</feature>
<feature type="helix" evidence="19">
    <location>
        <begin position="121"/>
        <end position="126"/>
    </location>
</feature>
<feature type="helix" evidence="19">
    <location>
        <begin position="134"/>
        <end position="149"/>
    </location>
</feature>
<feature type="helix" evidence="19">
    <location>
        <begin position="155"/>
        <end position="173"/>
    </location>
</feature>
<feature type="helix" evidence="19">
    <location>
        <begin position="177"/>
        <end position="179"/>
    </location>
</feature>
<feature type="helix" evidence="19">
    <location>
        <begin position="185"/>
        <end position="206"/>
    </location>
</feature>
<feature type="helix" evidence="19">
    <location>
        <begin position="213"/>
        <end position="228"/>
    </location>
</feature>
<feature type="helix" evidence="19">
    <location>
        <begin position="230"/>
        <end position="233"/>
    </location>
</feature>
<feature type="helix" evidence="18">
    <location>
        <begin position="253"/>
        <end position="256"/>
    </location>
</feature>
<sequence>MDYFPVISVDLQSGRRVVSVEYFRGDGPPRIPYSMVGPCCVFLMHHRPSHEVRLRFSDFYNVGEFPYRVGLGDFASNVAPPPAKPFQRLIDLIGHMTLSDFTRFPNLKEAISWPLGEPSLAFFDLSSTRVHRNDDIRRDQIATLAMRSCKITNDLEDSFVGLHRMIATEAILRGIDLCLLPGFDLMYEVAHVQCVRLLQAAKEDISNAVVPNSALIVLMEESLMLRSSLPSMMGRNNWIPVIPPIPDVEMESEEESDDDGFVEVD</sequence>
<protein>
    <recommendedName>
        <fullName>Non-structural protein S</fullName>
        <shortName>NSs</shortName>
    </recommendedName>
</protein>
<reference key="1">
    <citation type="journal article" date="1991" name="Virology">
        <title>Sequences and coding strategies of the S RNAs of Toscana and Rift Valley fever viruses compared to those of Punta Toro, Sicilian Sandfly fever, and Uukuniemi viruses.</title>
        <authorList>
            <person name="Giorgi C."/>
            <person name="Accardi L."/>
            <person name="Nicoletti L."/>
            <person name="Gro M.C."/>
            <person name="Takehara K."/>
            <person name="Hilditch C."/>
            <person name="Morikawa S."/>
            <person name="Bishop D.H.L."/>
        </authorList>
    </citation>
    <scope>NUCLEOTIDE SEQUENCE [GENOMIC RNA]</scope>
</reference>
<reference key="2">
    <citation type="journal article" date="2007" name="J. Virol.">
        <title>Complete genome analysis of 33 ecologically and biologically diverse Rift Valley fever virus strains reveals widespread virus movement and low genetic diversity due to recent common ancestry.</title>
        <authorList>
            <person name="Bird B.H."/>
            <person name="Khristova M.L."/>
            <person name="Rollin P.E."/>
            <person name="Ksiazek T.G."/>
            <person name="Nichol S.T."/>
        </authorList>
    </citation>
    <scope>NUCLEOTIDE SEQUENCE [GENOMIC RNA]</scope>
    <source>
        <strain>2250/74</strain>
        <strain>MgH824</strain>
        <strain>ZH-501</strain>
        <strain>ZH-548</strain>
    </source>
</reference>
<reference key="3">
    <citation type="journal article" date="2017" name="Open Forum Infect. Dis.">
        <title>Detection of the Northeastern African Rift Valley Fever Virus Lineage During the 2015 Outbreak in Mauritania.</title>
        <authorList>
            <person name="Bob N.S."/>
            <person name="Ba H."/>
            <person name="Fall G."/>
            <person name="Ishagh E."/>
            <person name="Diallo M.Y."/>
            <person name="Sow A."/>
            <person name="Sembene P.M."/>
            <person name="Faye O."/>
            <person name="El Kouri B."/>
            <person name="Sidi M.L."/>
            <person name="Sall A.A."/>
        </authorList>
    </citation>
    <scope>NUCLEOTIDE SEQUENCE [GENOMIC RNA]</scope>
    <source>
        <strain>272660</strain>
    </source>
</reference>
<reference key="4">
    <citation type="journal article" date="1982" name="J. Gen. Virol.">
        <title>Identification of a major non-structural protein in the nuclei of Rift Valley fever virus-infected cells.</title>
        <authorList>
            <person name="Struthers J.K."/>
            <person name="Swanepoel R."/>
        </authorList>
    </citation>
    <scope>SUBCELLULAR LOCATION</scope>
</reference>
<reference key="5">
    <citation type="journal article" date="1999" name="J. Virol.">
        <title>The carboxy-terminal acidic domain of Rift Valley Fever virus NSs protein is essential for the formation of filamentous structures but not for the nuclear localization of the protein.</title>
        <authorList>
            <person name="Yadani F.Z."/>
            <person name="Kohl A."/>
            <person name="Prehaud C."/>
            <person name="Billecocq A."/>
            <person name="Bouloy M."/>
        </authorList>
    </citation>
    <scope>SUBCELLULAR LOCATION</scope>
    <scope>FUNCTION</scope>
    <scope>SUBUNIT</scope>
    <scope>PHOSPHORYLATION AT SER-252 AND SER-256</scope>
    <scope>DOMAIN</scope>
</reference>
<reference key="6">
    <citation type="journal article" date="2009" name="Ann. N. Y. Acad. Sci.">
        <title>Dual functions of Rift Valley fever virus NSs protein: inhibition of host mRNA transcription and post-transcriptional downregulation of protein kinase PKR.</title>
        <authorList>
            <person name="Ikegami T."/>
            <person name="Narayanan K."/>
            <person name="Won S."/>
            <person name="Kamitani W."/>
            <person name="Peters C.J."/>
            <person name="Makino S."/>
        </authorList>
    </citation>
    <scope>FUNCTION</scope>
</reference>
<reference key="7">
    <citation type="journal article" date="2009" name="J. Virol.">
        <title>NSs protein of rift valley fever virus induces the specific degradation of the double-stranded RNA-dependent protein kinase.</title>
        <authorList>
            <person name="Habjan M."/>
            <person name="Pichlmair A."/>
            <person name="Elliott R.M."/>
            <person name="Overby A.K."/>
            <person name="Glatter T."/>
            <person name="Gstaiger M."/>
            <person name="Superti-Furga G."/>
            <person name="Unger H."/>
            <person name="Weber F."/>
        </authorList>
    </citation>
    <scope>FUNCTION</scope>
</reference>
<reference key="8">
    <citation type="journal article" date="2009" name="PLoS Pathog.">
        <title>Rift Valley fever virus NSs protein promotes post-transcriptional downregulation of protein kinase PKR and inhibits eIF2alpha phosphorylation.</title>
        <authorList>
            <person name="Ikegami T."/>
            <person name="Narayanan K."/>
            <person name="Won S."/>
            <person name="Kamitani W."/>
            <person name="Peters C.J."/>
            <person name="Makino S."/>
        </authorList>
    </citation>
    <scope>FUNCTION</scope>
</reference>
<reference key="9">
    <citation type="journal article" date="2011" name="J. Virol.">
        <title>NSs protein of rift valley fever virus promotes posttranslational downregulation of the TFIIH subunit p62.</title>
        <authorList>
            <person name="Kalveram B."/>
            <person name="Lihoradova O."/>
            <person name="Ikegami T."/>
        </authorList>
    </citation>
    <scope>FUNCTION</scope>
</reference>
<reference key="10">
    <citation type="journal article" date="2013" name="Virology">
        <title>Rift Valley fever virus NSs inhibits host transcription independently of the degradation of dsRNA-dependent protein kinase PKR.</title>
        <authorList>
            <person name="Kalveram B."/>
            <person name="Lihoradova O."/>
            <person name="Indran S.V."/>
            <person name="Lokugamage N."/>
            <person name="Head J.A."/>
            <person name="Ikegami T."/>
        </authorList>
    </citation>
    <scope>FUNCTION</scope>
    <scope>MUTAGENESIS OF ARG-173</scope>
</reference>
<reference key="11">
    <citation type="journal article" date="2014" name="J. Virol.">
        <title>Virulence factor NSs of rift valley fever virus recruits the F-box protein FBXO3 to degrade subunit p62 of general transcription factor TFIIH.</title>
        <authorList>
            <person name="Kainulainen M."/>
            <person name="Habjan M."/>
            <person name="Hubel P."/>
            <person name="Busch L."/>
            <person name="Lau S."/>
            <person name="Colinge J."/>
            <person name="Superti-Furga G."/>
            <person name="Pichlmair A."/>
            <person name="Weber F."/>
        </authorList>
    </citation>
    <scope>INTERACTION WITH HOST FBXO3 ISOFORMS 1 AND 2</scope>
    <scope>FUNCTION</scope>
</reference>
<reference key="12">
    <citation type="journal article" date="2016" name="PLoS Pathog.">
        <title>Protein Kinase R degradation is essential for Rift valley fever Virus infection and is regulated by SKP1-CUL1-F-box (SCF)FBXW11-NSs E3 ligase.</title>
        <authorList>
            <person name="Mudhasani R."/>
            <person name="Tran J.P."/>
            <person name="Retterer C."/>
            <person name="Kota K.P."/>
            <person name="Whitehouse C.A."/>
            <person name="Bavari S."/>
        </authorList>
    </citation>
    <scope>FUNCTION</scope>
    <scope>INTERACTION WITH HOST FBXW11</scope>
    <scope>DOMAIN</scope>
</reference>
<reference key="13">
    <citation type="journal article" date="2020" name="J. Virol.">
        <title>The NSs Protein Encoded by the Virulent Strain of Rift Valley Fever Virus Targets the Expression of Abl2 and the Actin Cytoskeleton of the Host, Affecting Cell Mobility, Cell Shape, and Cell-Cell Adhesion.</title>
        <authorList>
            <person name="Bamia A."/>
            <person name="Marcato V."/>
            <person name="Boissiere M."/>
            <person name="Mansuroglu Z."/>
            <person name="Tamietti C."/>
            <person name="Romani M."/>
            <person name="Simon D."/>
            <person name="Tian G."/>
            <person name="Niedergang F."/>
            <person name="Panthier J.J."/>
            <person name="Flamand M."/>
            <person name="Soues S."/>
            <person name="Bonnefoy E."/>
        </authorList>
    </citation>
    <scope>FUNCTION</scope>
    <source>
        <strain>MP12</strain>
        <strain>ZH548</strain>
    </source>
</reference>
<reference key="14">
    <citation type="journal article" date="2020" name="Nat. Commun.">
        <title>NSs amyloid formation is associated with the virulence of Rift Valley fever virus in mice.</title>
        <authorList>
            <person name="Leger P."/>
            <person name="Nachman E."/>
            <person name="Richter K."/>
            <person name="Tamietti C."/>
            <person name="Koch J."/>
            <person name="Burk R."/>
            <person name="Kummer S."/>
            <person name="Xin Q."/>
            <person name="Stanifer M."/>
            <person name="Bouloy M."/>
            <person name="Boulant S."/>
            <person name="Kraeusslich H.G."/>
            <person name="Montagutelli X."/>
            <person name="Flamand M."/>
            <person name="Nussbaum-Krammer C."/>
            <person name="Lozach P.Y."/>
        </authorList>
    </citation>
    <scope>FUNCTION</scope>
</reference>
<reference key="15">
    <citation type="journal article" date="2024" name="Cell">
        <title>Rift Valley fever virus coordinates the assembly of a programmable E3 ligase to promote viral replication.</title>
        <authorList>
            <person name="Li H."/>
            <person name="Zhang Y."/>
            <person name="Rao G."/>
            <person name="Zhang C."/>
            <person name="Guan Z."/>
            <person name="Huang Z."/>
            <person name="Li S."/>
            <person name="Lozach P.Y."/>
            <person name="Cao S."/>
            <person name="Peng K."/>
        </authorList>
    </citation>
    <scope>FUNCTION</scope>
    <scope>INTERACTION WITH HOST FBXO3 AND GTF2H1</scope>
    <scope>MUTAGENESIS OF ARG-16; ARG-30; PRO-80; PRO-81; PRO-82; LYS-84; ARG-88; LYS-150; ASN-153; ASP-157; ARG-164; THR-168; ARG-173; CYS-178; GLU-221; SER-228; ARG-235; ASN-237 AND PRO-240</scope>
</reference>
<reference key="16">
    <citation type="journal article" date="2015" name="Proc. Natl. Acad. Sci. U.S.A.">
        <title>A OmegaXaV motif in the Rift Valley fever virus NSs protein is essential for degrading p62, forming nuclear filaments and virulence.</title>
        <authorList>
            <person name="Cyr N."/>
            <person name="de la Fuente C."/>
            <person name="Lecoq L."/>
            <person name="Guendel I."/>
            <person name="Chabot P.R."/>
            <person name="Kehn-Hall K."/>
            <person name="Omichinski J.G."/>
        </authorList>
    </citation>
    <scope>STRUCTURE BY NMR OF 247-265</scope>
    <scope>INTERACTION WITH HOST GTF2H1</scope>
    <scope>DOMAIN</scope>
    <scope>MUTAGENESIS OF PHE-261</scope>
    <scope>SUBCELLULAR LOCATION</scope>
</reference>
<reference evidence="17" key="17">
    <citation type="journal article" date="2017" name="Elife">
        <title>Rift Valley fever phlebovirus NSs protein core domain structure suggests molecular basis for nuclear filaments.</title>
        <authorList>
            <person name="Barski M."/>
            <person name="Brennan B."/>
            <person name="Miller O.K."/>
            <person name="Potter J.A."/>
            <person name="Vijayakrishnan S."/>
            <person name="Bhella D."/>
            <person name="Naismith J.H."/>
            <person name="Elliott R.M."/>
            <person name="Schwarz-Linek U."/>
        </authorList>
    </citation>
    <scope>X-RAY CRYSTALLOGRAPHY (2.20 ANGSTROMS) OF 83-248</scope>
    <scope>SUBUNIT</scope>
    <scope>FUNCTION</scope>
</reference>
<organism>
    <name type="scientific">Rift valley fever virus (strain ZH-548 M12)</name>
    <name type="common">RVFV</name>
    <dbReference type="NCBI Taxonomy" id="11589"/>
    <lineage>
        <taxon>Viruses</taxon>
        <taxon>Riboviria</taxon>
        <taxon>Orthornavirae</taxon>
        <taxon>Negarnaviricota</taxon>
        <taxon>Polyploviricotina</taxon>
        <taxon>Ellioviricetes</taxon>
        <taxon>Bunyavirales</taxon>
        <taxon>Phenuiviridae</taxon>
        <taxon>Phlebovirus</taxon>
        <taxon>Phlebovirus riftense</taxon>
    </lineage>
</organism>